<organism>
    <name type="scientific">Plasmodium falciparum (isolate HB3)</name>
    <dbReference type="NCBI Taxonomy" id="137071"/>
    <lineage>
        <taxon>Eukaryota</taxon>
        <taxon>Sar</taxon>
        <taxon>Alveolata</taxon>
        <taxon>Apicomplexa</taxon>
        <taxon>Aconoidasida</taxon>
        <taxon>Haemosporida</taxon>
        <taxon>Plasmodiidae</taxon>
        <taxon>Plasmodium</taxon>
        <taxon>Plasmodium (Laverania)</taxon>
    </lineage>
</organism>
<sequence>MGEEDVQALVVDNGSGNVKAGVAGDDAPRSVFPSIVGRPKNPGIMVGMEEKDAFVGDEAQTKRGILTLKYPIEHGIVTNWDDMEKIWHHTFYNELRAAPEEHPVLLTEAPLNPKGNRERMTQIMFESFNVPAMYVAIQAVLSLYSSGRTTGIVLDSGDGVSHTVPIYEGYALPHAIMRLDLAGRDLTEYLMKILHERGYGFSTSAEKEIVRDIKEKLCYIALNFDEEMKTSEQSSDIEKSYELPDGNIITVGNERFRCPEALFQPSFLGKEAAGIHTTTFNSIKKCDVDIRKDLYGNIVLSGGTTMYEGIGERLTRDITTLAPSTMKIKVVAPPERKYSVWIGGSILSSLSTFQQMWITKEEYDESGPSIVHRKCF</sequence>
<evidence type="ECO:0000250" key="1">
    <source>
        <dbReference type="UniProtKB" id="Q4Z1L3"/>
    </source>
</evidence>
<evidence type="ECO:0000250" key="2">
    <source>
        <dbReference type="UniProtKB" id="Q8I4X0"/>
    </source>
</evidence>
<evidence type="ECO:0000255" key="3"/>
<evidence type="ECO:0000269" key="4">
    <source>
    </source>
</evidence>
<evidence type="ECO:0000303" key="5">
    <source>
    </source>
</evidence>
<evidence type="ECO:0000305" key="6"/>
<evidence type="ECO:0000312" key="7">
    <source>
        <dbReference type="EMBL" id="KOB63137.1"/>
    </source>
</evidence>
<evidence type="ECO:0000312" key="8">
    <source>
        <dbReference type="Proteomes" id="UP000054289"/>
    </source>
</evidence>
<keyword id="KW-0067">ATP-binding</keyword>
<keyword id="KW-0963">Cytoplasm</keyword>
<keyword id="KW-0206">Cytoskeleton</keyword>
<keyword id="KW-0378">Hydrolase</keyword>
<keyword id="KW-0547">Nucleotide-binding</keyword>
<keyword id="KW-0539">Nucleus</keyword>
<keyword id="KW-1185">Reference proteome</keyword>
<feature type="chain" id="PRO_0000376863" description="Actin-1">
    <location>
        <begin position="1"/>
        <end position="376"/>
    </location>
</feature>
<feature type="region of interest" description="DNAseI-binding D loop; regulates polymerization and stability of the actin filament" evidence="1">
    <location>
        <begin position="40"/>
        <end position="61"/>
    </location>
</feature>
<feature type="binding site" evidence="2">
    <location>
        <position position="15"/>
    </location>
    <ligand>
        <name>ATP</name>
        <dbReference type="ChEBI" id="CHEBI:30616"/>
    </ligand>
</feature>
<feature type="binding site" evidence="2">
    <location>
        <position position="16"/>
    </location>
    <ligand>
        <name>ATP</name>
        <dbReference type="ChEBI" id="CHEBI:30616"/>
    </ligand>
</feature>
<feature type="binding site" evidence="2">
    <location>
        <position position="17"/>
    </location>
    <ligand>
        <name>ATP</name>
        <dbReference type="ChEBI" id="CHEBI:30616"/>
    </ligand>
</feature>
<feature type="binding site" evidence="2">
    <location>
        <position position="19"/>
    </location>
    <ligand>
        <name>ATP</name>
        <dbReference type="ChEBI" id="CHEBI:30616"/>
    </ligand>
</feature>
<feature type="binding site" evidence="2">
    <location>
        <position position="158"/>
    </location>
    <ligand>
        <name>ATP</name>
        <dbReference type="ChEBI" id="CHEBI:30616"/>
    </ligand>
</feature>
<feature type="binding site" evidence="2">
    <location>
        <position position="159"/>
    </location>
    <ligand>
        <name>ATP</name>
        <dbReference type="ChEBI" id="CHEBI:30616"/>
    </ligand>
</feature>
<feature type="binding site" evidence="2">
    <location>
        <position position="160"/>
    </location>
    <ligand>
        <name>ATP</name>
        <dbReference type="ChEBI" id="CHEBI:30616"/>
    </ligand>
</feature>
<feature type="binding site" evidence="2">
    <location>
        <position position="214"/>
    </location>
    <ligand>
        <name>ATP</name>
        <dbReference type="ChEBI" id="CHEBI:30616"/>
    </ligand>
</feature>
<feature type="binding site" evidence="2">
    <location>
        <position position="215"/>
    </location>
    <ligand>
        <name>ATP</name>
        <dbReference type="ChEBI" id="CHEBI:30616"/>
    </ligand>
</feature>
<feature type="binding site" evidence="2">
    <location>
        <position position="303"/>
    </location>
    <ligand>
        <name>ATP</name>
        <dbReference type="ChEBI" id="CHEBI:30616"/>
    </ligand>
</feature>
<gene>
    <name evidence="5" type="primary">ACT1</name>
    <name evidence="2" type="synonym">ACTI</name>
    <name evidence="7" type="ORF">PFHG_04907</name>
</gene>
<accession>P86287</accession>
<accession>A0A0L7KIG0</accession>
<reference evidence="8" key="1">
    <citation type="submission" date="2006-03" db="EMBL/GenBank/DDBJ databases">
        <title>Annotation of Plasmodium falciparum HB3.</title>
        <authorList>
            <consortium name="The Broad Institute Genome Sequencing Platform"/>
            <person name="Volkman S.K."/>
            <person name="Neafsey D.E."/>
            <person name="Dash A.P."/>
            <person name="Chitnis C.E."/>
            <person name="Hartl D.L."/>
            <person name="Young S.K."/>
            <person name="Zeng Q."/>
            <person name="Koehrsen M."/>
            <person name="Alvarado L."/>
            <person name="Berlin A."/>
            <person name="Borenstein D."/>
            <person name="Chapman S.B."/>
            <person name="Chen Z."/>
            <person name="Engels R."/>
            <person name="Freedman E."/>
            <person name="Gellesch M."/>
            <person name="Goldberg J."/>
            <person name="Griggs A."/>
            <person name="Gujja S."/>
            <person name="Heilman E.R."/>
            <person name="Heiman D.I."/>
            <person name="Howarth C."/>
            <person name="Jen D."/>
            <person name="Larson L."/>
            <person name="Mehta T."/>
            <person name="Neiman D."/>
            <person name="Park D."/>
            <person name="Pearson M."/>
            <person name="Roberts A."/>
            <person name="Saif S."/>
            <person name="Shea T."/>
            <person name="Shenoy N."/>
            <person name="Sisk P."/>
            <person name="Stolte C."/>
            <person name="Sykes S."/>
            <person name="Walk T."/>
            <person name="White J."/>
            <person name="Yandava C."/>
            <person name="Haas B."/>
            <person name="Henn M.R."/>
            <person name="Nusbaum C."/>
            <person name="Birren B."/>
        </authorList>
    </citation>
    <scope>NUCLEOTIDE SEQUENCE [LARGE SCALE GENOMIC DNA]</scope>
    <source>
        <strain evidence="8">HB3</strain>
    </source>
</reference>
<reference evidence="6" key="2">
    <citation type="journal article" date="2005" name="FEBS Lett.">
        <title>Unusual properties of Plasmodium falciparum actin: new insights into microfilament dynamics of apicomplexan parasites.</title>
        <authorList>
            <person name="Schueler H."/>
            <person name="Mueller A.-K."/>
            <person name="Matuschewski K."/>
        </authorList>
    </citation>
    <scope>FUNCTION</scope>
    <scope>SUBUNIT</scope>
</reference>
<protein>
    <recommendedName>
        <fullName evidence="5">Actin-1</fullName>
        <shortName evidence="5">PfACT1</shortName>
        <ecNumber evidence="2">3.6.4.-</ecNumber>
    </recommendedName>
    <alternativeName>
        <fullName evidence="2">Actin I</fullName>
    </alternativeName>
</protein>
<comment type="function">
    <text evidence="2 4">Actin is a highly conserved protein that polymerizes to produce filaments that form cross-linked networks in the cytoplasm (PubMed:15670824). Polymerizes into shorter and less stable actin filaments compared to ACT2/actin-2; this is thought to facilitate gliding motility and host cell invasion (PubMed:15670824). Has ATPase activity (By similarity). ATP hydrolysis leads to the formation of a stable intermediate ADP-inorganic phosphate (Pi) actin, which is followed by the release of Pi (By similarity). ATP hydrolysis affects filament stability; ADP-bound actin depolymerizes much faster than ATP- or ADP-Pi-bound actin (By similarity). Plays an essential role during the asexual blood stage (By similarity). At the segmented schizont stage, required for apicoplast migration and segregation into individual daughter merozoites (By similarity). Also, required for the separation of daughter merozoites in the final stages of cytokinesis (By similarity). Essential for merozoite invasion of, but not adhesion to or reorientation towards, host erythrocytes (By similarity).</text>
</comment>
<comment type="catalytic activity">
    <reaction evidence="2">
        <text>ATP + H2O = ADP + phosphate + H(+)</text>
        <dbReference type="Rhea" id="RHEA:13065"/>
        <dbReference type="ChEBI" id="CHEBI:15377"/>
        <dbReference type="ChEBI" id="CHEBI:15378"/>
        <dbReference type="ChEBI" id="CHEBI:30616"/>
        <dbReference type="ChEBI" id="CHEBI:43474"/>
        <dbReference type="ChEBI" id="CHEBI:456216"/>
    </reaction>
</comment>
<comment type="activity regulation">
    <text evidence="2">ATP hydrolysis occurs in the polymeric state (By similarity). Unlike for mammalian actin, ATP hydrolysis also occurs in the monomeric form and the release of inorganic phosphate (Pi) is more efficient (By similarity).</text>
</comment>
<comment type="subunit">
    <text evidence="2 4">Monomer (G-actin) (PubMed:15670824). Oligomer (F-actin) (PubMed:15670824). Polymerization of globular actin (G-actin) leads to a structural filament (F-actin) in the form of a two-stranded helix (PubMed:15670824). Unlike for mammalian monomeric actin, parasite monomeric actin is able to induce oligomerization in the presence of ATP or ADP (By similarity). Mg(2+), which is used to coordinate ATP, is required for polymerization (By similarity). Interacts with MyoA (By similarity). Interacts with DNase I with low affinity (PubMed:15670824).</text>
</comment>
<comment type="subcellular location">
    <subcellularLocation>
        <location evidence="1">Cytoplasm</location>
    </subcellularLocation>
    <subcellularLocation>
        <location evidence="1">Nucleus</location>
    </subcellularLocation>
    <subcellularLocation>
        <location evidence="2">Cytoplasm</location>
        <location evidence="2">Cytoskeleton</location>
    </subcellularLocation>
    <text evidence="1 2">During host erythrocyte invasion, filamentous actin localizes close to the junction between merozoites and the host cell (By similarity). In schizonts, filamentous actin appears to connect apicoplasts (By similarity). Prior to gametocyte activation in the mosquito midgut, localizes to both the cytoplasm and the nucleus (By similarity). Following gametocyte activation, relocalizes completely to the cytoplasm, in an ACT2-dependent manner (By similarity).</text>
</comment>
<comment type="miscellaneous">
    <text evidence="2">A potassium ion appears to reside in the active site during hydrolysis and leaves together with the inorganic phosphate Pi. K(+) does not activate Pi release; however, it may be relevant for ATP hydrolysis.</text>
</comment>
<comment type="miscellaneous">
    <text evidence="2 4">ACT1 and ACT2 differ in their polymerization, filament stability and helical structure (By similarity). Unlike mammalian actin, Apicomplexa actins do not form long and stable filaments (PubMed:15670824).</text>
</comment>
<comment type="similarity">
    <text evidence="3">Belongs to the actin family.</text>
</comment>
<dbReference type="EC" id="3.6.4.-" evidence="2"/>
<dbReference type="EMBL" id="CH672142">
    <property type="protein sequence ID" value="KOB63137.1"/>
    <property type="molecule type" value="Genomic_DNA"/>
</dbReference>
<dbReference type="EMBL" id="AANS01001675">
    <property type="status" value="NOT_ANNOTATED_CDS"/>
    <property type="molecule type" value="Genomic_DNA"/>
</dbReference>
<dbReference type="EMDB" id="EMD-3805"/>
<dbReference type="SMR" id="P86287"/>
<dbReference type="DrugBank" id="DB11638">
    <property type="generic name" value="Artenimol"/>
</dbReference>
<dbReference type="EnsemblProtists" id="KOB63137">
    <property type="protein sequence ID" value="KOB63137"/>
    <property type="gene ID" value="PFHG_04907"/>
</dbReference>
<dbReference type="KEGG" id="pfh:PFHG_04907"/>
<dbReference type="VEuPathDB" id="PlasmoDB:PfHB3_120051000"/>
<dbReference type="OMA" id="FHTTAER"/>
<dbReference type="OrthoDB" id="259at418107"/>
<dbReference type="Proteomes" id="UP000054289">
    <property type="component" value="Unassembled WGS sequence"/>
</dbReference>
<dbReference type="GO" id="GO:0005884">
    <property type="term" value="C:actin filament"/>
    <property type="evidence" value="ECO:0000314"/>
    <property type="project" value="UniProtKB"/>
</dbReference>
<dbReference type="GO" id="GO:0005737">
    <property type="term" value="C:cytoplasm"/>
    <property type="evidence" value="ECO:0007669"/>
    <property type="project" value="UniProtKB-SubCell"/>
</dbReference>
<dbReference type="GO" id="GO:0005634">
    <property type="term" value="C:nucleus"/>
    <property type="evidence" value="ECO:0007669"/>
    <property type="project" value="UniProtKB-SubCell"/>
</dbReference>
<dbReference type="GO" id="GO:0005524">
    <property type="term" value="F:ATP binding"/>
    <property type="evidence" value="ECO:0007669"/>
    <property type="project" value="UniProtKB-KW"/>
</dbReference>
<dbReference type="GO" id="GO:0016787">
    <property type="term" value="F:hydrolase activity"/>
    <property type="evidence" value="ECO:0007669"/>
    <property type="project" value="UniProtKB-KW"/>
</dbReference>
<dbReference type="GO" id="GO:0005200">
    <property type="term" value="F:structural constituent of cytoskeleton"/>
    <property type="evidence" value="ECO:0000314"/>
    <property type="project" value="UniProtKB"/>
</dbReference>
<dbReference type="GO" id="GO:0070360">
    <property type="term" value="P:symbiont-mediated actin polymerization-dependent cell-to-cell migration in host"/>
    <property type="evidence" value="ECO:0000315"/>
    <property type="project" value="UniProtKB"/>
</dbReference>
<dbReference type="CDD" id="cd10224">
    <property type="entry name" value="ASKHA_NBD_actin"/>
    <property type="match status" value="1"/>
</dbReference>
<dbReference type="FunFam" id="3.30.420.40:FF:000205">
    <property type="entry name" value="Actin, alpha skeletal muscle"/>
    <property type="match status" value="1"/>
</dbReference>
<dbReference type="FunFam" id="3.90.640.10:FF:000001">
    <property type="entry name" value="Actin, muscle"/>
    <property type="match status" value="1"/>
</dbReference>
<dbReference type="FunFam" id="3.30.420.40:FF:000018">
    <property type="entry name" value="Actin-like protein (Centractin)"/>
    <property type="match status" value="1"/>
</dbReference>
<dbReference type="FunFam" id="3.30.420.40:FF:000404">
    <property type="entry name" value="Major actin"/>
    <property type="match status" value="1"/>
</dbReference>
<dbReference type="FunFam" id="3.30.420.40:FF:000058">
    <property type="entry name" value="Putative actin-related protein 5"/>
    <property type="match status" value="1"/>
</dbReference>
<dbReference type="Gene3D" id="3.30.420.40">
    <property type="match status" value="2"/>
</dbReference>
<dbReference type="Gene3D" id="3.90.640.10">
    <property type="entry name" value="Actin, Chain A, domain 4"/>
    <property type="match status" value="1"/>
</dbReference>
<dbReference type="InterPro" id="IPR004000">
    <property type="entry name" value="Actin"/>
</dbReference>
<dbReference type="InterPro" id="IPR020902">
    <property type="entry name" value="Actin/actin-like_CS"/>
</dbReference>
<dbReference type="InterPro" id="IPR004001">
    <property type="entry name" value="Actin_CS"/>
</dbReference>
<dbReference type="InterPro" id="IPR043129">
    <property type="entry name" value="ATPase_NBD"/>
</dbReference>
<dbReference type="PANTHER" id="PTHR11937">
    <property type="entry name" value="ACTIN"/>
    <property type="match status" value="1"/>
</dbReference>
<dbReference type="Pfam" id="PF00022">
    <property type="entry name" value="Actin"/>
    <property type="match status" value="1"/>
</dbReference>
<dbReference type="PRINTS" id="PR00190">
    <property type="entry name" value="ACTIN"/>
</dbReference>
<dbReference type="SMART" id="SM00268">
    <property type="entry name" value="ACTIN"/>
    <property type="match status" value="1"/>
</dbReference>
<dbReference type="SUPFAM" id="SSF53067">
    <property type="entry name" value="Actin-like ATPase domain"/>
    <property type="match status" value="2"/>
</dbReference>
<dbReference type="PROSITE" id="PS00406">
    <property type="entry name" value="ACTINS_1"/>
    <property type="match status" value="1"/>
</dbReference>
<dbReference type="PROSITE" id="PS00432">
    <property type="entry name" value="ACTINS_2"/>
    <property type="match status" value="1"/>
</dbReference>
<dbReference type="PROSITE" id="PS01132">
    <property type="entry name" value="ACTINS_ACT_LIKE"/>
    <property type="match status" value="1"/>
</dbReference>
<name>ACT1_PLAFX</name>
<proteinExistence type="evidence at protein level"/>